<sequence length="382" mass="41368">MAILPLSISHSLTSALSATSSGIGRPVARLLHPRVPSRPTVICLAAPPKVPVPIASPASLGDDPSKWDPAECDALLRGGEQVASVLQEMLKLMEDMEMDGSFESLAVELIAQGVIGKRVDEMESGFLMALDYMIQLAEKDSDNERKSLLEVVKQTVLDHLTKKCPPHVQVVGLLCQTEKKDSRHELLRRVAAGGGVFKNDKGLKCQIPGANLNDIANQADDLLESMESRPTIPDRKLLARLVIVREEARNMMGGGLLDERNDRGFTTLPEAEVNFLSKLVALKPGKALERMIKDVMQGKAEGADNIENANAGPDSKLNHLTGISGRGSVTGLKPRPVRPGMFLETVSKVLGGIYANNTSGITAQHLEWVHQTTLKILQEMAF</sequence>
<evidence type="ECO:0000250" key="1">
    <source>
        <dbReference type="UniProtKB" id="Q1H5E9"/>
    </source>
</evidence>
<evidence type="ECO:0000255" key="2"/>
<evidence type="ECO:0000305" key="3"/>
<evidence type="ECO:0000312" key="4">
    <source>
        <dbReference type="EMBL" id="AAX94817.1"/>
    </source>
</evidence>
<evidence type="ECO:0000312" key="5">
    <source>
        <dbReference type="EMBL" id="BAT13785.1"/>
    </source>
</evidence>
<evidence type="ECO:0000312" key="6">
    <source>
        <dbReference type="EMBL" id="EEE59640.1"/>
    </source>
</evidence>
<protein>
    <recommendedName>
        <fullName evidence="3">Protein PEP-RELATED DEVELOPMENT ARRESTED 1 homolog, chloroplastic</fullName>
        <shortName evidence="3">OsPRDA1</shortName>
    </recommendedName>
</protein>
<keyword id="KW-0025">Alternative splicing</keyword>
<keyword id="KW-0150">Chloroplast</keyword>
<keyword id="KW-0934">Plastid</keyword>
<keyword id="KW-1185">Reference proteome</keyword>
<keyword id="KW-0809">Transit peptide</keyword>
<organism>
    <name type="scientific">Oryza sativa subsp. japonica</name>
    <name type="common">Rice</name>
    <dbReference type="NCBI Taxonomy" id="39947"/>
    <lineage>
        <taxon>Eukaryota</taxon>
        <taxon>Viridiplantae</taxon>
        <taxon>Streptophyta</taxon>
        <taxon>Embryophyta</taxon>
        <taxon>Tracheophyta</taxon>
        <taxon>Spermatophyta</taxon>
        <taxon>Magnoliopsida</taxon>
        <taxon>Liliopsida</taxon>
        <taxon>Poales</taxon>
        <taxon>Poaceae</taxon>
        <taxon>BOP clade</taxon>
        <taxon>Oryzoideae</taxon>
        <taxon>Oryzeae</taxon>
        <taxon>Oryzinae</taxon>
        <taxon>Oryza</taxon>
        <taxon>Oryza sativa</taxon>
    </lineage>
</organism>
<reference key="1">
    <citation type="journal article" date="2005" name="BMC Biol.">
        <title>The sequence of rice chromosomes 11 and 12, rich in disease resistance genes and recent gene duplications.</title>
        <authorList>
            <consortium name="The rice chromosomes 11 and 12 sequencing consortia"/>
        </authorList>
    </citation>
    <scope>NUCLEOTIDE SEQUENCE [LARGE SCALE GENOMIC DNA]</scope>
    <source>
        <strain>cv. Nipponbare</strain>
    </source>
</reference>
<reference key="2">
    <citation type="journal article" date="2005" name="Nature">
        <title>The map-based sequence of the rice genome.</title>
        <authorList>
            <consortium name="International rice genome sequencing project (IRGSP)"/>
        </authorList>
    </citation>
    <scope>NUCLEOTIDE SEQUENCE [LARGE SCALE GENOMIC DNA]</scope>
    <source>
        <strain>cv. Nipponbare</strain>
    </source>
</reference>
<reference key="3">
    <citation type="journal article" date="2008" name="Nucleic Acids Res.">
        <title>The rice annotation project database (RAP-DB): 2008 update.</title>
        <authorList>
            <consortium name="The rice annotation project (RAP)"/>
        </authorList>
    </citation>
    <scope>GENOME REANNOTATION</scope>
    <source>
        <strain>cv. Nipponbare</strain>
    </source>
</reference>
<reference key="4">
    <citation type="journal article" date="2013" name="Rice">
        <title>Improvement of the Oryza sativa Nipponbare reference genome using next generation sequence and optical map data.</title>
        <authorList>
            <person name="Kawahara Y."/>
            <person name="de la Bastide M."/>
            <person name="Hamilton J.P."/>
            <person name="Kanamori H."/>
            <person name="McCombie W.R."/>
            <person name="Ouyang S."/>
            <person name="Schwartz D.C."/>
            <person name="Tanaka T."/>
            <person name="Wu J."/>
            <person name="Zhou S."/>
            <person name="Childs K.L."/>
            <person name="Davidson R.M."/>
            <person name="Lin H."/>
            <person name="Quesada-Ocampo L."/>
            <person name="Vaillancourt B."/>
            <person name="Sakai H."/>
            <person name="Lee S.S."/>
            <person name="Kim J."/>
            <person name="Numa H."/>
            <person name="Itoh T."/>
            <person name="Buell C.R."/>
            <person name="Matsumoto T."/>
        </authorList>
    </citation>
    <scope>GENOME REANNOTATION</scope>
    <source>
        <strain>cv. Nipponbare</strain>
    </source>
</reference>
<reference key="5">
    <citation type="journal article" date="2005" name="PLoS Biol.">
        <title>The genomes of Oryza sativa: a history of duplications.</title>
        <authorList>
            <person name="Yu J."/>
            <person name="Wang J."/>
            <person name="Lin W."/>
            <person name="Li S."/>
            <person name="Li H."/>
            <person name="Zhou J."/>
            <person name="Ni P."/>
            <person name="Dong W."/>
            <person name="Hu S."/>
            <person name="Zeng C."/>
            <person name="Zhang J."/>
            <person name="Zhang Y."/>
            <person name="Li R."/>
            <person name="Xu Z."/>
            <person name="Li S."/>
            <person name="Li X."/>
            <person name="Zheng H."/>
            <person name="Cong L."/>
            <person name="Lin L."/>
            <person name="Yin J."/>
            <person name="Geng J."/>
            <person name="Li G."/>
            <person name="Shi J."/>
            <person name="Liu J."/>
            <person name="Lv H."/>
            <person name="Li J."/>
            <person name="Wang J."/>
            <person name="Deng Y."/>
            <person name="Ran L."/>
            <person name="Shi X."/>
            <person name="Wang X."/>
            <person name="Wu Q."/>
            <person name="Li C."/>
            <person name="Ren X."/>
            <person name="Wang J."/>
            <person name="Wang X."/>
            <person name="Li D."/>
            <person name="Liu D."/>
            <person name="Zhang X."/>
            <person name="Ji Z."/>
            <person name="Zhao W."/>
            <person name="Sun Y."/>
            <person name="Zhang Z."/>
            <person name="Bao J."/>
            <person name="Han Y."/>
            <person name="Dong L."/>
            <person name="Ji J."/>
            <person name="Chen P."/>
            <person name="Wu S."/>
            <person name="Liu J."/>
            <person name="Xiao Y."/>
            <person name="Bu D."/>
            <person name="Tan J."/>
            <person name="Yang L."/>
            <person name="Ye C."/>
            <person name="Zhang J."/>
            <person name="Xu J."/>
            <person name="Zhou Y."/>
            <person name="Yu Y."/>
            <person name="Zhang B."/>
            <person name="Zhuang S."/>
            <person name="Wei H."/>
            <person name="Liu B."/>
            <person name="Lei M."/>
            <person name="Yu H."/>
            <person name="Li Y."/>
            <person name="Xu H."/>
            <person name="Wei S."/>
            <person name="He X."/>
            <person name="Fang L."/>
            <person name="Zhang Z."/>
            <person name="Zhang Y."/>
            <person name="Huang X."/>
            <person name="Su Z."/>
            <person name="Tong W."/>
            <person name="Li J."/>
            <person name="Tong Z."/>
            <person name="Li S."/>
            <person name="Ye J."/>
            <person name="Wang L."/>
            <person name="Fang L."/>
            <person name="Lei T."/>
            <person name="Chen C.-S."/>
            <person name="Chen H.-C."/>
            <person name="Xu Z."/>
            <person name="Li H."/>
            <person name="Huang H."/>
            <person name="Zhang F."/>
            <person name="Xu H."/>
            <person name="Li N."/>
            <person name="Zhao C."/>
            <person name="Li S."/>
            <person name="Dong L."/>
            <person name="Huang Y."/>
            <person name="Li L."/>
            <person name="Xi Y."/>
            <person name="Qi Q."/>
            <person name="Li W."/>
            <person name="Zhang B."/>
            <person name="Hu W."/>
            <person name="Zhang Y."/>
            <person name="Tian X."/>
            <person name="Jiao Y."/>
            <person name="Liang X."/>
            <person name="Jin J."/>
            <person name="Gao L."/>
            <person name="Zheng W."/>
            <person name="Hao B."/>
            <person name="Liu S.-M."/>
            <person name="Wang W."/>
            <person name="Yuan L."/>
            <person name="Cao M."/>
            <person name="McDermott J."/>
            <person name="Samudrala R."/>
            <person name="Wang J."/>
            <person name="Wong G.K.-S."/>
            <person name="Yang H."/>
        </authorList>
    </citation>
    <scope>NUCLEOTIDE SEQUENCE [LARGE SCALE GENOMIC DNA]</scope>
    <source>
        <strain>cv. Nipponbare</strain>
    </source>
</reference>
<reference key="6">
    <citation type="journal article" date="2003" name="Science">
        <title>Collection, mapping, and annotation of over 28,000 cDNA clones from japonica rice.</title>
        <authorList>
            <consortium name="The rice full-length cDNA consortium"/>
        </authorList>
    </citation>
    <scope>NUCLEOTIDE SEQUENCE [LARGE SCALE MRNA] (ISOFORMS 1 AND 2)</scope>
    <source>
        <strain>cv. Nipponbare</strain>
    </source>
</reference>
<dbReference type="EMBL" id="AC146913">
    <property type="protein sequence ID" value="AAX94817.1"/>
    <property type="molecule type" value="Genomic_DNA"/>
</dbReference>
<dbReference type="EMBL" id="AC146913">
    <property type="protein sequence ID" value="AAX94819.1"/>
    <property type="status" value="ALT_SEQ"/>
    <property type="molecule type" value="Genomic_DNA"/>
</dbReference>
<dbReference type="EMBL" id="AC146913">
    <property type="protein sequence ID" value="AAX94820.1"/>
    <property type="molecule type" value="Genomic_DNA"/>
</dbReference>
<dbReference type="EMBL" id="DP000010">
    <property type="protein sequence ID" value="ABA93180.1"/>
    <property type="molecule type" value="Genomic_DNA"/>
</dbReference>
<dbReference type="EMBL" id="DP000010">
    <property type="protein sequence ID" value="ABA93181.1"/>
    <property type="molecule type" value="Genomic_DNA"/>
</dbReference>
<dbReference type="EMBL" id="DP000010">
    <property type="protein sequence ID" value="ABA93182.1"/>
    <property type="molecule type" value="Genomic_DNA"/>
</dbReference>
<dbReference type="EMBL" id="AP008217">
    <property type="protein sequence ID" value="BAF28138.1"/>
    <property type="molecule type" value="Genomic_DNA"/>
</dbReference>
<dbReference type="EMBL" id="AP014967">
    <property type="protein sequence ID" value="BAT13785.1"/>
    <property type="molecule type" value="Genomic_DNA"/>
</dbReference>
<dbReference type="EMBL" id="AP014967">
    <property type="protein sequence ID" value="BAT13786.1"/>
    <property type="molecule type" value="Genomic_DNA"/>
</dbReference>
<dbReference type="EMBL" id="CM000140">
    <property type="protein sequence ID" value="EEE59640.1"/>
    <property type="molecule type" value="Genomic_DNA"/>
</dbReference>
<dbReference type="EMBL" id="AK065810">
    <property type="protein sequence ID" value="BAG89688.1"/>
    <property type="molecule type" value="mRNA"/>
</dbReference>
<dbReference type="EMBL" id="AK067248">
    <property type="protein sequence ID" value="BAG90331.1"/>
    <property type="molecule type" value="mRNA"/>
</dbReference>
<dbReference type="RefSeq" id="XP_015615211.1">
    <property type="nucleotide sequence ID" value="XM_015759725.1"/>
</dbReference>
<dbReference type="RefSeq" id="XP_015615212.1">
    <property type="nucleotide sequence ID" value="XM_015759726.1"/>
</dbReference>
<dbReference type="SMR" id="Q53K52"/>
<dbReference type="FunCoup" id="Q53K52">
    <property type="interactions" value="841"/>
</dbReference>
<dbReference type="STRING" id="39947.Q53K52"/>
<dbReference type="PaxDb" id="39947-Q53K52"/>
<dbReference type="EnsemblPlants" id="Os11t0425300-01">
    <molecule id="Q53K52-1"/>
    <property type="protein sequence ID" value="Os11t0425300-01"/>
    <property type="gene ID" value="Os11g0425300"/>
</dbReference>
<dbReference type="Gramene" id="Os11t0425300-01">
    <molecule id="Q53K52-1"/>
    <property type="protein sequence ID" value="Os11t0425300-01"/>
    <property type="gene ID" value="Os11g0425300"/>
</dbReference>
<dbReference type="KEGG" id="dosa:Os11g0425300"/>
<dbReference type="eggNOG" id="ENOG502QRV4">
    <property type="taxonomic scope" value="Eukaryota"/>
</dbReference>
<dbReference type="HOGENOM" id="CLU_046485_1_0_1"/>
<dbReference type="InParanoid" id="Q53K52"/>
<dbReference type="OMA" id="LEDMKMN"/>
<dbReference type="OrthoDB" id="2015968at2759"/>
<dbReference type="Proteomes" id="UP000000763">
    <property type="component" value="Chromosome 11"/>
</dbReference>
<dbReference type="Proteomes" id="UP000007752">
    <property type="component" value="Chromosome 3"/>
</dbReference>
<dbReference type="Proteomes" id="UP000059680">
    <property type="component" value="Chromosome 11"/>
</dbReference>
<dbReference type="GO" id="GO:0042644">
    <property type="term" value="C:chloroplast nucleoid"/>
    <property type="evidence" value="ECO:0007669"/>
    <property type="project" value="UniProtKB-SubCell"/>
</dbReference>
<dbReference type="GO" id="GO:0006355">
    <property type="term" value="P:regulation of DNA-templated transcription"/>
    <property type="evidence" value="ECO:0007669"/>
    <property type="project" value="InterPro"/>
</dbReference>
<dbReference type="InterPro" id="IPR038961">
    <property type="entry name" value="PRDA1"/>
</dbReference>
<dbReference type="PANTHER" id="PTHR37262">
    <property type="entry name" value="PROTEIN PEP-RELATED DEVELOPMENT ARRESTED 1, CHLOROPLASTIC"/>
    <property type="match status" value="1"/>
</dbReference>
<dbReference type="PANTHER" id="PTHR37262:SF1">
    <property type="entry name" value="PROTEIN PEP-RELATED DEVELOPMENT ARRESTED 1, CHLOROPLASTIC"/>
    <property type="match status" value="1"/>
</dbReference>
<gene>
    <name evidence="5" type="ordered locus">Os11g0425300</name>
    <name evidence="4" type="ordered locus">LOC_Os11g23790</name>
    <name evidence="6" type="ORF">OsJ_12008</name>
</gene>
<proteinExistence type="evidence at transcript level"/>
<feature type="transit peptide" description="Chloroplast" evidence="2">
    <location>
        <begin position="1"/>
        <end position="44"/>
    </location>
</feature>
<feature type="chain" id="PRO_0000439385" description="Protein PEP-RELATED DEVELOPMENT ARRESTED 1 homolog, chloroplastic">
    <location>
        <begin position="45"/>
        <end position="382"/>
    </location>
</feature>
<feature type="splice variant" id="VSP_058841" description="In isoform 2.">
    <original>LGGIYANNTSGITA</original>
    <variation>VYMQTTHLALQHNI</variation>
    <location>
        <begin position="350"/>
        <end position="363"/>
    </location>
</feature>
<feature type="splice variant" id="VSP_058842" description="In isoform 2.">
    <location>
        <begin position="364"/>
        <end position="382"/>
    </location>
</feature>
<comment type="function">
    <text evidence="1">Plays an essential role in early steps of chloroplast development. May be involved in the redox control of plastid gene expression by maintening the redox state around chloroplast nucleoids. May positively regulate plastid-encoded RNA polymerase (PEP) activity.</text>
</comment>
<comment type="subcellular location">
    <subcellularLocation>
        <location evidence="1">Plastid</location>
        <location evidence="1">Chloroplast stroma</location>
        <location evidence="1">Chloroplast nucleoid</location>
    </subcellularLocation>
</comment>
<comment type="alternative products">
    <event type="alternative splicing"/>
    <isoform>
        <id>Q53K52-1</id>
        <name>1</name>
        <sequence type="displayed"/>
    </isoform>
    <isoform>
        <id>Q53K52-2</id>
        <name>2</name>
        <sequence type="described" ref="VSP_058841 VSP_058842"/>
    </isoform>
</comment>
<comment type="sequence caution" evidence="3">
    <conflict type="erroneous gene model prediction">
        <sequence resource="EMBL-CDS" id="AAX94819"/>
    </conflict>
</comment>
<accession>Q53K52</accession>
<accession>Q53K50</accession>
<accession>Q53K51</accession>
<name>PRDA1_ORYSJ</name>